<organism>
    <name type="scientific">Psychromonas ingrahamii (strain DSM 17664 / CCUG 51855 / 37)</name>
    <dbReference type="NCBI Taxonomy" id="357804"/>
    <lineage>
        <taxon>Bacteria</taxon>
        <taxon>Pseudomonadati</taxon>
        <taxon>Pseudomonadota</taxon>
        <taxon>Gammaproteobacteria</taxon>
        <taxon>Alteromonadales</taxon>
        <taxon>Psychromonadaceae</taxon>
        <taxon>Psychromonas</taxon>
    </lineage>
</organism>
<accession>A1SYL6</accession>
<comment type="function">
    <text evidence="1">This protein is one of the early assembly proteins of the 50S ribosomal subunit, although it is not seen to bind rRNA by itself. It is important during the early stages of 50S assembly.</text>
</comment>
<comment type="subunit">
    <text evidence="1">Part of the 50S ribosomal subunit.</text>
</comment>
<comment type="similarity">
    <text evidence="1">Belongs to the universal ribosomal protein uL13 family.</text>
</comment>
<feature type="chain" id="PRO_1000055449" description="Large ribosomal subunit protein uL13">
    <location>
        <begin position="1"/>
        <end position="142"/>
    </location>
</feature>
<protein>
    <recommendedName>
        <fullName evidence="1">Large ribosomal subunit protein uL13</fullName>
    </recommendedName>
    <alternativeName>
        <fullName evidence="2">50S ribosomal protein L13</fullName>
    </alternativeName>
</protein>
<name>RL13_PSYIN</name>
<keyword id="KW-1185">Reference proteome</keyword>
<keyword id="KW-0687">Ribonucleoprotein</keyword>
<keyword id="KW-0689">Ribosomal protein</keyword>
<reference key="1">
    <citation type="journal article" date="2008" name="BMC Genomics">
        <title>Genomics of an extreme psychrophile, Psychromonas ingrahamii.</title>
        <authorList>
            <person name="Riley M."/>
            <person name="Staley J.T."/>
            <person name="Danchin A."/>
            <person name="Wang T.Z."/>
            <person name="Brettin T.S."/>
            <person name="Hauser L.J."/>
            <person name="Land M.L."/>
            <person name="Thompson L.S."/>
        </authorList>
    </citation>
    <scope>NUCLEOTIDE SEQUENCE [LARGE SCALE GENOMIC DNA]</scope>
    <source>
        <strain>DSM 17664 / CCUG 51855 / 37</strain>
    </source>
</reference>
<dbReference type="EMBL" id="CP000510">
    <property type="protein sequence ID" value="ABM04581.1"/>
    <property type="molecule type" value="Genomic_DNA"/>
</dbReference>
<dbReference type="RefSeq" id="WP_011771135.1">
    <property type="nucleotide sequence ID" value="NC_008709.1"/>
</dbReference>
<dbReference type="SMR" id="A1SYL6"/>
<dbReference type="STRING" id="357804.Ping_2877"/>
<dbReference type="KEGG" id="pin:Ping_2877"/>
<dbReference type="eggNOG" id="COG0102">
    <property type="taxonomic scope" value="Bacteria"/>
</dbReference>
<dbReference type="HOGENOM" id="CLU_082184_2_2_6"/>
<dbReference type="OrthoDB" id="9801330at2"/>
<dbReference type="Proteomes" id="UP000000639">
    <property type="component" value="Chromosome"/>
</dbReference>
<dbReference type="GO" id="GO:0022625">
    <property type="term" value="C:cytosolic large ribosomal subunit"/>
    <property type="evidence" value="ECO:0007669"/>
    <property type="project" value="TreeGrafter"/>
</dbReference>
<dbReference type="GO" id="GO:0003729">
    <property type="term" value="F:mRNA binding"/>
    <property type="evidence" value="ECO:0007669"/>
    <property type="project" value="TreeGrafter"/>
</dbReference>
<dbReference type="GO" id="GO:0003735">
    <property type="term" value="F:structural constituent of ribosome"/>
    <property type="evidence" value="ECO:0007669"/>
    <property type="project" value="InterPro"/>
</dbReference>
<dbReference type="GO" id="GO:0017148">
    <property type="term" value="P:negative regulation of translation"/>
    <property type="evidence" value="ECO:0007669"/>
    <property type="project" value="TreeGrafter"/>
</dbReference>
<dbReference type="GO" id="GO:0006412">
    <property type="term" value="P:translation"/>
    <property type="evidence" value="ECO:0007669"/>
    <property type="project" value="UniProtKB-UniRule"/>
</dbReference>
<dbReference type="CDD" id="cd00392">
    <property type="entry name" value="Ribosomal_L13"/>
    <property type="match status" value="1"/>
</dbReference>
<dbReference type="FunFam" id="3.90.1180.10:FF:000001">
    <property type="entry name" value="50S ribosomal protein L13"/>
    <property type="match status" value="1"/>
</dbReference>
<dbReference type="Gene3D" id="3.90.1180.10">
    <property type="entry name" value="Ribosomal protein L13"/>
    <property type="match status" value="1"/>
</dbReference>
<dbReference type="HAMAP" id="MF_01366">
    <property type="entry name" value="Ribosomal_uL13"/>
    <property type="match status" value="1"/>
</dbReference>
<dbReference type="InterPro" id="IPR005822">
    <property type="entry name" value="Ribosomal_uL13"/>
</dbReference>
<dbReference type="InterPro" id="IPR005823">
    <property type="entry name" value="Ribosomal_uL13_bac-type"/>
</dbReference>
<dbReference type="InterPro" id="IPR023563">
    <property type="entry name" value="Ribosomal_uL13_CS"/>
</dbReference>
<dbReference type="InterPro" id="IPR036899">
    <property type="entry name" value="Ribosomal_uL13_sf"/>
</dbReference>
<dbReference type="NCBIfam" id="TIGR01066">
    <property type="entry name" value="rplM_bact"/>
    <property type="match status" value="1"/>
</dbReference>
<dbReference type="PANTHER" id="PTHR11545:SF2">
    <property type="entry name" value="LARGE RIBOSOMAL SUBUNIT PROTEIN UL13M"/>
    <property type="match status" value="1"/>
</dbReference>
<dbReference type="PANTHER" id="PTHR11545">
    <property type="entry name" value="RIBOSOMAL PROTEIN L13"/>
    <property type="match status" value="1"/>
</dbReference>
<dbReference type="Pfam" id="PF00572">
    <property type="entry name" value="Ribosomal_L13"/>
    <property type="match status" value="1"/>
</dbReference>
<dbReference type="PIRSF" id="PIRSF002181">
    <property type="entry name" value="Ribosomal_L13"/>
    <property type="match status" value="1"/>
</dbReference>
<dbReference type="SUPFAM" id="SSF52161">
    <property type="entry name" value="Ribosomal protein L13"/>
    <property type="match status" value="1"/>
</dbReference>
<dbReference type="PROSITE" id="PS00783">
    <property type="entry name" value="RIBOSOMAL_L13"/>
    <property type="match status" value="1"/>
</dbReference>
<gene>
    <name evidence="1" type="primary">rplM</name>
    <name type="ordered locus">Ping_2877</name>
</gene>
<proteinExistence type="inferred from homology"/>
<sequence length="142" mass="15909">MKTFVAKPAEVKRDWFVVDAEGKTLGRLATEIALRLRGKHKAEYTPHVDTGDYIIVINAEKITVTGNKAKGKIYYHHTGFIGGIKAISFEDLIKRAPERVIEKAVKGMLPRGPLGRAMYRKLKVYAGTEHQHSAQQPQVLDI</sequence>
<evidence type="ECO:0000255" key="1">
    <source>
        <dbReference type="HAMAP-Rule" id="MF_01366"/>
    </source>
</evidence>
<evidence type="ECO:0000305" key="2"/>